<accession>P82945</accession>
<protein>
    <recommendedName>
        <fullName>Voltage-dependent anion-selective channel protein</fullName>
        <shortName>VDAC</shortName>
    </recommendedName>
    <alternativeName>
        <fullName>Outer mitochondrial membrane protein porin</fullName>
    </alternativeName>
</protein>
<sequence>VPPVYADLGKGARDLFSKGYNYGFSKL</sequence>
<name>VDAC_DORPE</name>
<reference evidence="6" key="1">
    <citation type="submission" date="2001-01" db="UniProtKB">
        <title>Purification and identification of porin in squid photoreceptor membranes.</title>
        <authorList>
            <person name="Mohammed M."/>
            <person name="Ahmed T."/>
            <person name="Findlay J.B.C."/>
        </authorList>
    </citation>
    <scope>PROTEIN SEQUENCE</scope>
    <scope>FUNCTION</scope>
    <scope>TISSUE SPECIFICITY</scope>
    <source>
        <tissue evidence="4">Retinal photoreceptor</tissue>
    </source>
</reference>
<evidence type="ECO:0000250" key="1"/>
<evidence type="ECO:0000250" key="2">
    <source>
        <dbReference type="UniProtKB" id="Q94920"/>
    </source>
</evidence>
<evidence type="ECO:0000255" key="3"/>
<evidence type="ECO:0000269" key="4">
    <source ref="1"/>
</evidence>
<evidence type="ECO:0000303" key="5">
    <source ref="1"/>
</evidence>
<evidence type="ECO:0000305" key="6"/>
<dbReference type="SMR" id="P82945"/>
<dbReference type="GO" id="GO:0005741">
    <property type="term" value="C:mitochondrial outer membrane"/>
    <property type="evidence" value="ECO:0007669"/>
    <property type="project" value="UniProtKB-SubCell"/>
</dbReference>
<dbReference type="GO" id="GO:0046930">
    <property type="term" value="C:pore complex"/>
    <property type="evidence" value="ECO:0007669"/>
    <property type="project" value="UniProtKB-KW"/>
</dbReference>
<dbReference type="GO" id="GO:0015288">
    <property type="term" value="F:porin activity"/>
    <property type="evidence" value="ECO:0007669"/>
    <property type="project" value="UniProtKB-KW"/>
</dbReference>
<dbReference type="GO" id="GO:0006811">
    <property type="term" value="P:monoatomic ion transport"/>
    <property type="evidence" value="ECO:0007669"/>
    <property type="project" value="UniProtKB-KW"/>
</dbReference>
<dbReference type="Gene3D" id="2.40.160.10">
    <property type="entry name" value="Porin"/>
    <property type="match status" value="1"/>
</dbReference>
<dbReference type="InterPro" id="IPR023614">
    <property type="entry name" value="Porin_dom_sf"/>
</dbReference>
<proteinExistence type="evidence at protein level"/>
<organism>
    <name type="scientific">Doryteuthis pealeii</name>
    <name type="common">Longfin inshore squid</name>
    <name type="synonym">Loligo pealeii</name>
    <dbReference type="NCBI Taxonomy" id="1051067"/>
    <lineage>
        <taxon>Eukaryota</taxon>
        <taxon>Metazoa</taxon>
        <taxon>Spiralia</taxon>
        <taxon>Lophotrochozoa</taxon>
        <taxon>Mollusca</taxon>
        <taxon>Cephalopoda</taxon>
        <taxon>Coleoidea</taxon>
        <taxon>Decapodiformes</taxon>
        <taxon>Myopsida</taxon>
        <taxon>Loliginidae</taxon>
        <taxon>Doryteuthis</taxon>
    </lineage>
</organism>
<comment type="function">
    <text evidence="4">Forms a channel through the cell membrane that allows diffusion of small hydrophilic molecules.</text>
</comment>
<comment type="subunit">
    <text evidence="2">Interacts with hexokinases.</text>
</comment>
<comment type="subcellular location">
    <subcellularLocation>
        <location evidence="1">Mitochondrion outer membrane</location>
    </subcellularLocation>
</comment>
<comment type="tissue specificity">
    <text evidence="4">Photoreceptors.</text>
</comment>
<comment type="domain">
    <text evidence="6">Consists mainly of membrane-spanning sided beta-sheets.</text>
</comment>
<comment type="similarity">
    <text evidence="3">Belongs to the eukaryotic mitochondrial porin family.</text>
</comment>
<feature type="chain" id="PRO_0000263033" description="Voltage-dependent anion-selective channel protein">
    <location>
        <begin position="1"/>
        <end position="27" status="greater than"/>
    </location>
</feature>
<feature type="non-terminal residue" evidence="5">
    <location>
        <position position="27"/>
    </location>
</feature>
<keyword id="KW-0903">Direct protein sequencing</keyword>
<keyword id="KW-0406">Ion transport</keyword>
<keyword id="KW-0472">Membrane</keyword>
<keyword id="KW-0496">Mitochondrion</keyword>
<keyword id="KW-1000">Mitochondrion outer membrane</keyword>
<keyword id="KW-0626">Porin</keyword>
<keyword id="KW-0812">Transmembrane</keyword>
<keyword id="KW-1134">Transmembrane beta strand</keyword>
<keyword id="KW-0813">Transport</keyword>